<name>YCF15_DRANE</name>
<geneLocation type="chloroplast"/>
<keyword id="KW-0150">Chloroplast</keyword>
<keyword id="KW-0934">Plastid</keyword>
<dbReference type="EMBL" id="AP009373">
    <property type="protein sequence ID" value="BAF50418.1"/>
    <property type="molecule type" value="Genomic_DNA"/>
</dbReference>
<dbReference type="EMBL" id="AP009373">
    <property type="protein sequence ID" value="BAF50437.1"/>
    <property type="molecule type" value="Genomic_DNA"/>
</dbReference>
<dbReference type="GO" id="GO:0009507">
    <property type="term" value="C:chloroplast"/>
    <property type="evidence" value="ECO:0007669"/>
    <property type="project" value="UniProtKB-SubCell"/>
</dbReference>
<dbReference type="InterPro" id="IPR019645">
    <property type="entry name" value="Uncharacterised_Ycf15"/>
</dbReference>
<dbReference type="Pfam" id="PF10705">
    <property type="entry name" value="Ycf15"/>
    <property type="match status" value="1"/>
</dbReference>
<protein>
    <recommendedName>
        <fullName>Putative uncharacterized protein ycf15</fullName>
    </recommendedName>
    <alternativeName>
        <fullName>Orf77</fullName>
    </alternativeName>
</protein>
<organism>
    <name type="scientific">Draba nemorosa</name>
    <name type="common">Woodland whitlowgrass</name>
    <dbReference type="NCBI Taxonomy" id="171822"/>
    <lineage>
        <taxon>Eukaryota</taxon>
        <taxon>Viridiplantae</taxon>
        <taxon>Streptophyta</taxon>
        <taxon>Embryophyta</taxon>
        <taxon>Tracheophyta</taxon>
        <taxon>Spermatophyta</taxon>
        <taxon>Magnoliopsida</taxon>
        <taxon>eudicotyledons</taxon>
        <taxon>Gunneridae</taxon>
        <taxon>Pentapetalae</taxon>
        <taxon>rosids</taxon>
        <taxon>malvids</taxon>
        <taxon>Brassicales</taxon>
        <taxon>Brassicaceae</taxon>
        <taxon>Arabideae</taxon>
        <taxon>Draba</taxon>
    </lineage>
</organism>
<feature type="chain" id="PRO_0000360383" description="Putative uncharacterized protein ycf15">
    <location>
        <begin position="1"/>
        <end position="77"/>
    </location>
</feature>
<comment type="subcellular location">
    <subcellularLocation>
        <location>Plastid</location>
        <location>Chloroplast</location>
    </subcellularLocation>
</comment>
<comment type="similarity">
    <text evidence="1">Belongs to the ycf15 family.</text>
</comment>
<comment type="caution">
    <text evidence="1">Could be the product of a pseudogene.</text>
</comment>
<gene>
    <name type="primary">ycf15-A</name>
</gene>
<gene>
    <name type="primary">ycf15-B</name>
</gene>
<proteinExistence type="uncertain"/>
<reference key="1">
    <citation type="submission" date="2007-03" db="EMBL/GenBank/DDBJ databases">
        <title>Sequencing analysis of Draba nemoroza chloroplast DNA.</title>
        <authorList>
            <person name="Hosouchi T."/>
            <person name="Tsuruoka H."/>
            <person name="Kotani H."/>
        </authorList>
    </citation>
    <scope>NUCLEOTIDE SEQUENCE [LARGE SCALE GENOMIC DNA]</scope>
</reference>
<sequence length="77" mass="9050">MLLLKHGRIEILDQNTMYGWYELPKQEFLNSEQPELLLTTSKKFPLMKDGNPLENQKYACRMKLLLLSVPITNQLNN</sequence>
<evidence type="ECO:0000305" key="1"/>
<accession>A4QL63</accession>